<accession>Q66AG7</accession>
<evidence type="ECO:0000255" key="1">
    <source>
        <dbReference type="HAMAP-Rule" id="MF_00462"/>
    </source>
</evidence>
<proteinExistence type="inferred from homology"/>
<name>RNFD_YERPS</name>
<organism>
    <name type="scientific">Yersinia pseudotuberculosis serotype I (strain IP32953)</name>
    <dbReference type="NCBI Taxonomy" id="273123"/>
    <lineage>
        <taxon>Bacteria</taxon>
        <taxon>Pseudomonadati</taxon>
        <taxon>Pseudomonadota</taxon>
        <taxon>Gammaproteobacteria</taxon>
        <taxon>Enterobacterales</taxon>
        <taxon>Yersiniaceae</taxon>
        <taxon>Yersinia</taxon>
    </lineage>
</organism>
<reference key="1">
    <citation type="journal article" date="2004" name="Proc. Natl. Acad. Sci. U.S.A.">
        <title>Insights into the evolution of Yersinia pestis through whole-genome comparison with Yersinia pseudotuberculosis.</title>
        <authorList>
            <person name="Chain P.S.G."/>
            <person name="Carniel E."/>
            <person name="Larimer F.W."/>
            <person name="Lamerdin J."/>
            <person name="Stoutland P.O."/>
            <person name="Regala W.M."/>
            <person name="Georgescu A.M."/>
            <person name="Vergez L.M."/>
            <person name="Land M.L."/>
            <person name="Motin V.L."/>
            <person name="Brubaker R.R."/>
            <person name="Fowler J."/>
            <person name="Hinnebusch J."/>
            <person name="Marceau M."/>
            <person name="Medigue C."/>
            <person name="Simonet M."/>
            <person name="Chenal-Francisque V."/>
            <person name="Souza B."/>
            <person name="Dacheux D."/>
            <person name="Elliott J.M."/>
            <person name="Derbise A."/>
            <person name="Hauser L.J."/>
            <person name="Garcia E."/>
        </authorList>
    </citation>
    <scope>NUCLEOTIDE SEQUENCE [LARGE SCALE GENOMIC DNA]</scope>
    <source>
        <strain>IP32953</strain>
    </source>
</reference>
<protein>
    <recommendedName>
        <fullName evidence="1">Ion-translocating oxidoreductase complex subunit D</fullName>
        <ecNumber evidence="1">7.-.-.-</ecNumber>
    </recommendedName>
    <alternativeName>
        <fullName evidence="1">Rnf electron transport complex subunit D</fullName>
    </alternativeName>
</protein>
<comment type="function">
    <text evidence="1">Part of a membrane-bound complex that couples electron transfer with translocation of ions across the membrane.</text>
</comment>
<comment type="cofactor">
    <cofactor evidence="1">
        <name>FMN</name>
        <dbReference type="ChEBI" id="CHEBI:58210"/>
    </cofactor>
</comment>
<comment type="subunit">
    <text evidence="1">The complex is composed of six subunits: RnfA, RnfB, RnfC, RnfD, RnfE and RnfG.</text>
</comment>
<comment type="subcellular location">
    <subcellularLocation>
        <location evidence="1">Cell inner membrane</location>
        <topology evidence="1">Multi-pass membrane protein</topology>
    </subcellularLocation>
</comment>
<comment type="similarity">
    <text evidence="1">Belongs to the NqrB/RnfD family.</text>
</comment>
<dbReference type="EC" id="7.-.-.-" evidence="1"/>
<dbReference type="EMBL" id="BX936398">
    <property type="protein sequence ID" value="CAH21401.1"/>
    <property type="molecule type" value="Genomic_DNA"/>
</dbReference>
<dbReference type="SMR" id="Q66AG7"/>
<dbReference type="KEGG" id="ypo:BZ17_300"/>
<dbReference type="KEGG" id="yps:YPTB2163"/>
<dbReference type="PATRIC" id="fig|273123.14.peg.318"/>
<dbReference type="Proteomes" id="UP000001011">
    <property type="component" value="Chromosome"/>
</dbReference>
<dbReference type="GO" id="GO:0005886">
    <property type="term" value="C:plasma membrane"/>
    <property type="evidence" value="ECO:0007669"/>
    <property type="project" value="UniProtKB-SubCell"/>
</dbReference>
<dbReference type="GO" id="GO:0022900">
    <property type="term" value="P:electron transport chain"/>
    <property type="evidence" value="ECO:0007669"/>
    <property type="project" value="UniProtKB-UniRule"/>
</dbReference>
<dbReference type="GO" id="GO:0055085">
    <property type="term" value="P:transmembrane transport"/>
    <property type="evidence" value="ECO:0007669"/>
    <property type="project" value="InterPro"/>
</dbReference>
<dbReference type="HAMAP" id="MF_00462">
    <property type="entry name" value="RsxD_RnfD"/>
    <property type="match status" value="1"/>
</dbReference>
<dbReference type="InterPro" id="IPR004338">
    <property type="entry name" value="NqrB/RnfD"/>
</dbReference>
<dbReference type="InterPro" id="IPR011303">
    <property type="entry name" value="RnfD_bac"/>
</dbReference>
<dbReference type="NCBIfam" id="NF002011">
    <property type="entry name" value="PRK00816.1"/>
    <property type="match status" value="1"/>
</dbReference>
<dbReference type="NCBIfam" id="TIGR01946">
    <property type="entry name" value="rnfD"/>
    <property type="match status" value="1"/>
</dbReference>
<dbReference type="PANTHER" id="PTHR30578">
    <property type="entry name" value="ELECTRON TRANSPORT COMPLEX PROTEIN RNFD"/>
    <property type="match status" value="1"/>
</dbReference>
<dbReference type="PANTHER" id="PTHR30578:SF0">
    <property type="entry name" value="ION-TRANSLOCATING OXIDOREDUCTASE COMPLEX SUBUNIT D"/>
    <property type="match status" value="1"/>
</dbReference>
<dbReference type="Pfam" id="PF03116">
    <property type="entry name" value="NQR2_RnfD_RnfE"/>
    <property type="match status" value="1"/>
</dbReference>
<keyword id="KW-0997">Cell inner membrane</keyword>
<keyword id="KW-1003">Cell membrane</keyword>
<keyword id="KW-0249">Electron transport</keyword>
<keyword id="KW-0285">Flavoprotein</keyword>
<keyword id="KW-0288">FMN</keyword>
<keyword id="KW-0472">Membrane</keyword>
<keyword id="KW-0597">Phosphoprotein</keyword>
<keyword id="KW-1278">Translocase</keyword>
<keyword id="KW-0812">Transmembrane</keyword>
<keyword id="KW-1133">Transmembrane helix</keyword>
<keyword id="KW-0813">Transport</keyword>
<gene>
    <name evidence="1" type="primary">rnfD</name>
    <name type="ordered locus">YPTB2163</name>
</gene>
<feature type="chain" id="PRO_0000298244" description="Ion-translocating oxidoreductase complex subunit D">
    <location>
        <begin position="1"/>
        <end position="351"/>
    </location>
</feature>
<feature type="transmembrane region" description="Helical" evidence="1">
    <location>
        <begin position="18"/>
        <end position="38"/>
    </location>
</feature>
<feature type="transmembrane region" description="Helical" evidence="1">
    <location>
        <begin position="40"/>
        <end position="60"/>
    </location>
</feature>
<feature type="transmembrane region" description="Helical" evidence="1">
    <location>
        <begin position="87"/>
        <end position="107"/>
    </location>
</feature>
<feature type="transmembrane region" description="Helical" evidence="1">
    <location>
        <begin position="121"/>
        <end position="141"/>
    </location>
</feature>
<feature type="transmembrane region" description="Helical" evidence="1">
    <location>
        <begin position="211"/>
        <end position="231"/>
    </location>
</feature>
<feature type="transmembrane region" description="Helical" evidence="1">
    <location>
        <begin position="241"/>
        <end position="261"/>
    </location>
</feature>
<feature type="transmembrane region" description="Helical" evidence="1">
    <location>
        <begin position="264"/>
        <end position="284"/>
    </location>
</feature>
<feature type="transmembrane region" description="Helical" evidence="1">
    <location>
        <begin position="298"/>
        <end position="318"/>
    </location>
</feature>
<feature type="transmembrane region" description="Helical" evidence="1">
    <location>
        <begin position="320"/>
        <end position="340"/>
    </location>
</feature>
<feature type="modified residue" description="FMN phosphoryl threonine" evidence="1">
    <location>
        <position position="185"/>
    </location>
</feature>
<sequence>MQIASSPFTHNQRSTRRIMLLVILACIPGIIAQTYFFGYGSLIQVMLAMITALLAEGAVLQLRKQPVMARLQDNSALLTALLLGISLPPLAPWWMIVLGTLFAIVIAKQLYGGLGQNPFNPAMVGYVVLLISFPVQMTSWLPPLPLQGTSVGFYDSLLTIFTGYTHSGENIHQLQVGYDGISQATPLDTFKTSLRSQPADQILQQPIFGGVLAGLGWQWVNIGFLVGGLLLLWRKAIHWHIPVSFLLALGGCAAVSWMIAPQSFASPMLHLFSGATMLGAFFIATDPVSASTTPRGRLIFGALIGILVWLIRVYGGYPDGVAFAVLLANITVPLIDHYTQPRVYGHKSGHK</sequence>